<reference key="1">
    <citation type="journal article" date="1998" name="Nature">
        <title>The genome sequence of Rickettsia prowazekii and the origin of mitochondria.</title>
        <authorList>
            <person name="Andersson S.G.E."/>
            <person name="Zomorodipour A."/>
            <person name="Andersson J.O."/>
            <person name="Sicheritz-Ponten T."/>
            <person name="Alsmark U.C.M."/>
            <person name="Podowski R.M."/>
            <person name="Naeslund A.K."/>
            <person name="Eriksson A.-S."/>
            <person name="Winkler H.H."/>
            <person name="Kurland C.G."/>
        </authorList>
    </citation>
    <scope>NUCLEOTIDE SEQUENCE [LARGE SCALE GENOMIC DNA]</scope>
    <source>
        <strain>Madrid E</strain>
    </source>
</reference>
<comment type="similarity">
    <text evidence="1">Belongs to the bacterial ribosomal protein bL27 family.</text>
</comment>
<name>RL27_RICPR</name>
<protein>
    <recommendedName>
        <fullName evidence="1">Large ribosomal subunit protein bL27</fullName>
    </recommendedName>
    <alternativeName>
        <fullName evidence="3">50S ribosomal protein L27</fullName>
    </alternativeName>
</protein>
<organism>
    <name type="scientific">Rickettsia prowazekii (strain Madrid E)</name>
    <dbReference type="NCBI Taxonomy" id="272947"/>
    <lineage>
        <taxon>Bacteria</taxon>
        <taxon>Pseudomonadati</taxon>
        <taxon>Pseudomonadota</taxon>
        <taxon>Alphaproteobacteria</taxon>
        <taxon>Rickettsiales</taxon>
        <taxon>Rickettsiaceae</taxon>
        <taxon>Rickettsieae</taxon>
        <taxon>Rickettsia</taxon>
        <taxon>typhus group</taxon>
    </lineage>
</organism>
<proteinExistence type="inferred from homology"/>
<accession>Q9ZCI8</accession>
<feature type="chain" id="PRO_0000181156" description="Large ribosomal subunit protein bL27">
    <location>
        <begin position="1"/>
        <end position="86"/>
    </location>
</feature>
<feature type="region of interest" description="Disordered" evidence="2">
    <location>
        <begin position="1"/>
        <end position="26"/>
    </location>
</feature>
<evidence type="ECO:0000255" key="1">
    <source>
        <dbReference type="HAMAP-Rule" id="MF_00539"/>
    </source>
</evidence>
<evidence type="ECO:0000256" key="2">
    <source>
        <dbReference type="SAM" id="MobiDB-lite"/>
    </source>
</evidence>
<evidence type="ECO:0000305" key="3"/>
<gene>
    <name evidence="1" type="primary">rpmA</name>
    <name type="ordered locus">RP752</name>
</gene>
<sequence>MATKKAGGSSRNGRDSAGRRLGVKKSDGQYVIPGNIIVRQRGTKIHPGINVGLGKDHTIFSLIEGRVEFLTKQSHKIVNVKEIANV</sequence>
<keyword id="KW-1185">Reference proteome</keyword>
<keyword id="KW-0687">Ribonucleoprotein</keyword>
<keyword id="KW-0689">Ribosomal protein</keyword>
<dbReference type="EMBL" id="AJ235273">
    <property type="protein sequence ID" value="CAA15180.1"/>
    <property type="molecule type" value="Genomic_DNA"/>
</dbReference>
<dbReference type="PIR" id="D71635">
    <property type="entry name" value="D71635"/>
</dbReference>
<dbReference type="RefSeq" id="NP_221104.1">
    <property type="nucleotide sequence ID" value="NC_000963.1"/>
</dbReference>
<dbReference type="RefSeq" id="WP_004596998.1">
    <property type="nucleotide sequence ID" value="NC_000963.1"/>
</dbReference>
<dbReference type="SMR" id="Q9ZCI8"/>
<dbReference type="STRING" id="272947.gene:17555822"/>
<dbReference type="EnsemblBacteria" id="CAA15180">
    <property type="protein sequence ID" value="CAA15180"/>
    <property type="gene ID" value="CAA15180"/>
</dbReference>
<dbReference type="GeneID" id="57569874"/>
<dbReference type="KEGG" id="rpr:RP752"/>
<dbReference type="PATRIC" id="fig|272947.5.peg.786"/>
<dbReference type="eggNOG" id="COG0211">
    <property type="taxonomic scope" value="Bacteria"/>
</dbReference>
<dbReference type="HOGENOM" id="CLU_095424_4_1_5"/>
<dbReference type="OrthoDB" id="9803474at2"/>
<dbReference type="Proteomes" id="UP000002480">
    <property type="component" value="Chromosome"/>
</dbReference>
<dbReference type="GO" id="GO:1990904">
    <property type="term" value="C:ribonucleoprotein complex"/>
    <property type="evidence" value="ECO:0007669"/>
    <property type="project" value="UniProtKB-KW"/>
</dbReference>
<dbReference type="GO" id="GO:0005840">
    <property type="term" value="C:ribosome"/>
    <property type="evidence" value="ECO:0007669"/>
    <property type="project" value="UniProtKB-KW"/>
</dbReference>
<dbReference type="GO" id="GO:0003735">
    <property type="term" value="F:structural constituent of ribosome"/>
    <property type="evidence" value="ECO:0007669"/>
    <property type="project" value="InterPro"/>
</dbReference>
<dbReference type="GO" id="GO:0006412">
    <property type="term" value="P:translation"/>
    <property type="evidence" value="ECO:0007669"/>
    <property type="project" value="UniProtKB-UniRule"/>
</dbReference>
<dbReference type="FunFam" id="2.40.50.100:FF:000020">
    <property type="entry name" value="50S ribosomal protein L27"/>
    <property type="match status" value="1"/>
</dbReference>
<dbReference type="Gene3D" id="2.40.50.100">
    <property type="match status" value="1"/>
</dbReference>
<dbReference type="HAMAP" id="MF_00539">
    <property type="entry name" value="Ribosomal_bL27"/>
    <property type="match status" value="1"/>
</dbReference>
<dbReference type="InterPro" id="IPR001684">
    <property type="entry name" value="Ribosomal_bL27"/>
</dbReference>
<dbReference type="InterPro" id="IPR018261">
    <property type="entry name" value="Ribosomal_bL27_CS"/>
</dbReference>
<dbReference type="NCBIfam" id="TIGR00062">
    <property type="entry name" value="L27"/>
    <property type="match status" value="1"/>
</dbReference>
<dbReference type="PANTHER" id="PTHR15893:SF0">
    <property type="entry name" value="LARGE RIBOSOMAL SUBUNIT PROTEIN BL27M"/>
    <property type="match status" value="1"/>
</dbReference>
<dbReference type="PANTHER" id="PTHR15893">
    <property type="entry name" value="RIBOSOMAL PROTEIN L27"/>
    <property type="match status" value="1"/>
</dbReference>
<dbReference type="Pfam" id="PF01016">
    <property type="entry name" value="Ribosomal_L27"/>
    <property type="match status" value="1"/>
</dbReference>
<dbReference type="PRINTS" id="PR00063">
    <property type="entry name" value="RIBOSOMALL27"/>
</dbReference>
<dbReference type="SUPFAM" id="SSF110324">
    <property type="entry name" value="Ribosomal L27 protein-like"/>
    <property type="match status" value="1"/>
</dbReference>
<dbReference type="PROSITE" id="PS00831">
    <property type="entry name" value="RIBOSOMAL_L27"/>
    <property type="match status" value="1"/>
</dbReference>